<reference key="1">
    <citation type="journal article" date="2005" name="Science">
        <title>The transcriptional landscape of the mammalian genome.</title>
        <authorList>
            <person name="Carninci P."/>
            <person name="Kasukawa T."/>
            <person name="Katayama S."/>
            <person name="Gough J."/>
            <person name="Frith M.C."/>
            <person name="Maeda N."/>
            <person name="Oyama R."/>
            <person name="Ravasi T."/>
            <person name="Lenhard B."/>
            <person name="Wells C."/>
            <person name="Kodzius R."/>
            <person name="Shimokawa K."/>
            <person name="Bajic V.B."/>
            <person name="Brenner S.E."/>
            <person name="Batalov S."/>
            <person name="Forrest A.R."/>
            <person name="Zavolan M."/>
            <person name="Davis M.J."/>
            <person name="Wilming L.G."/>
            <person name="Aidinis V."/>
            <person name="Allen J.E."/>
            <person name="Ambesi-Impiombato A."/>
            <person name="Apweiler R."/>
            <person name="Aturaliya R.N."/>
            <person name="Bailey T.L."/>
            <person name="Bansal M."/>
            <person name="Baxter L."/>
            <person name="Beisel K.W."/>
            <person name="Bersano T."/>
            <person name="Bono H."/>
            <person name="Chalk A.M."/>
            <person name="Chiu K.P."/>
            <person name="Choudhary V."/>
            <person name="Christoffels A."/>
            <person name="Clutterbuck D.R."/>
            <person name="Crowe M.L."/>
            <person name="Dalla E."/>
            <person name="Dalrymple B.P."/>
            <person name="de Bono B."/>
            <person name="Della Gatta G."/>
            <person name="di Bernardo D."/>
            <person name="Down T."/>
            <person name="Engstrom P."/>
            <person name="Fagiolini M."/>
            <person name="Faulkner G."/>
            <person name="Fletcher C.F."/>
            <person name="Fukushima T."/>
            <person name="Furuno M."/>
            <person name="Futaki S."/>
            <person name="Gariboldi M."/>
            <person name="Georgii-Hemming P."/>
            <person name="Gingeras T.R."/>
            <person name="Gojobori T."/>
            <person name="Green R.E."/>
            <person name="Gustincich S."/>
            <person name="Harbers M."/>
            <person name="Hayashi Y."/>
            <person name="Hensch T.K."/>
            <person name="Hirokawa N."/>
            <person name="Hill D."/>
            <person name="Huminiecki L."/>
            <person name="Iacono M."/>
            <person name="Ikeo K."/>
            <person name="Iwama A."/>
            <person name="Ishikawa T."/>
            <person name="Jakt M."/>
            <person name="Kanapin A."/>
            <person name="Katoh M."/>
            <person name="Kawasawa Y."/>
            <person name="Kelso J."/>
            <person name="Kitamura H."/>
            <person name="Kitano H."/>
            <person name="Kollias G."/>
            <person name="Krishnan S.P."/>
            <person name="Kruger A."/>
            <person name="Kummerfeld S.K."/>
            <person name="Kurochkin I.V."/>
            <person name="Lareau L.F."/>
            <person name="Lazarevic D."/>
            <person name="Lipovich L."/>
            <person name="Liu J."/>
            <person name="Liuni S."/>
            <person name="McWilliam S."/>
            <person name="Madan Babu M."/>
            <person name="Madera M."/>
            <person name="Marchionni L."/>
            <person name="Matsuda H."/>
            <person name="Matsuzawa S."/>
            <person name="Miki H."/>
            <person name="Mignone F."/>
            <person name="Miyake S."/>
            <person name="Morris K."/>
            <person name="Mottagui-Tabar S."/>
            <person name="Mulder N."/>
            <person name="Nakano N."/>
            <person name="Nakauchi H."/>
            <person name="Ng P."/>
            <person name="Nilsson R."/>
            <person name="Nishiguchi S."/>
            <person name="Nishikawa S."/>
            <person name="Nori F."/>
            <person name="Ohara O."/>
            <person name="Okazaki Y."/>
            <person name="Orlando V."/>
            <person name="Pang K.C."/>
            <person name="Pavan W.J."/>
            <person name="Pavesi G."/>
            <person name="Pesole G."/>
            <person name="Petrovsky N."/>
            <person name="Piazza S."/>
            <person name="Reed J."/>
            <person name="Reid J.F."/>
            <person name="Ring B.Z."/>
            <person name="Ringwald M."/>
            <person name="Rost B."/>
            <person name="Ruan Y."/>
            <person name="Salzberg S.L."/>
            <person name="Sandelin A."/>
            <person name="Schneider C."/>
            <person name="Schoenbach C."/>
            <person name="Sekiguchi K."/>
            <person name="Semple C.A."/>
            <person name="Seno S."/>
            <person name="Sessa L."/>
            <person name="Sheng Y."/>
            <person name="Shibata Y."/>
            <person name="Shimada H."/>
            <person name="Shimada K."/>
            <person name="Silva D."/>
            <person name="Sinclair B."/>
            <person name="Sperling S."/>
            <person name="Stupka E."/>
            <person name="Sugiura K."/>
            <person name="Sultana R."/>
            <person name="Takenaka Y."/>
            <person name="Taki K."/>
            <person name="Tammoja K."/>
            <person name="Tan S.L."/>
            <person name="Tang S."/>
            <person name="Taylor M.S."/>
            <person name="Tegner J."/>
            <person name="Teichmann S.A."/>
            <person name="Ueda H.R."/>
            <person name="van Nimwegen E."/>
            <person name="Verardo R."/>
            <person name="Wei C.L."/>
            <person name="Yagi K."/>
            <person name="Yamanishi H."/>
            <person name="Zabarovsky E."/>
            <person name="Zhu S."/>
            <person name="Zimmer A."/>
            <person name="Hide W."/>
            <person name="Bult C."/>
            <person name="Grimmond S.M."/>
            <person name="Teasdale R.D."/>
            <person name="Liu E.T."/>
            <person name="Brusic V."/>
            <person name="Quackenbush J."/>
            <person name="Wahlestedt C."/>
            <person name="Mattick J.S."/>
            <person name="Hume D.A."/>
            <person name="Kai C."/>
            <person name="Sasaki D."/>
            <person name="Tomaru Y."/>
            <person name="Fukuda S."/>
            <person name="Kanamori-Katayama M."/>
            <person name="Suzuki M."/>
            <person name="Aoki J."/>
            <person name="Arakawa T."/>
            <person name="Iida J."/>
            <person name="Imamura K."/>
            <person name="Itoh M."/>
            <person name="Kato T."/>
            <person name="Kawaji H."/>
            <person name="Kawagashira N."/>
            <person name="Kawashima T."/>
            <person name="Kojima M."/>
            <person name="Kondo S."/>
            <person name="Konno H."/>
            <person name="Nakano K."/>
            <person name="Ninomiya N."/>
            <person name="Nishio T."/>
            <person name="Okada M."/>
            <person name="Plessy C."/>
            <person name="Shibata K."/>
            <person name="Shiraki T."/>
            <person name="Suzuki S."/>
            <person name="Tagami M."/>
            <person name="Waki K."/>
            <person name="Watahiki A."/>
            <person name="Okamura-Oho Y."/>
            <person name="Suzuki H."/>
            <person name="Kawai J."/>
            <person name="Hayashizaki Y."/>
        </authorList>
    </citation>
    <scope>NUCLEOTIDE SEQUENCE [LARGE SCALE MRNA]</scope>
    <source>
        <strain>NOD</strain>
        <tissue>Spleen</tissue>
    </source>
</reference>
<reference key="2">
    <citation type="journal article" date="2009" name="PLoS Biol.">
        <title>Lineage-specific biology revealed by a finished genome assembly of the mouse.</title>
        <authorList>
            <person name="Church D.M."/>
            <person name="Goodstadt L."/>
            <person name="Hillier L.W."/>
            <person name="Zody M.C."/>
            <person name="Goldstein S."/>
            <person name="She X."/>
            <person name="Bult C.J."/>
            <person name="Agarwala R."/>
            <person name="Cherry J.L."/>
            <person name="DiCuccio M."/>
            <person name="Hlavina W."/>
            <person name="Kapustin Y."/>
            <person name="Meric P."/>
            <person name="Maglott D."/>
            <person name="Birtle Z."/>
            <person name="Marques A.C."/>
            <person name="Graves T."/>
            <person name="Zhou S."/>
            <person name="Teague B."/>
            <person name="Potamousis K."/>
            <person name="Churas C."/>
            <person name="Place M."/>
            <person name="Herschleb J."/>
            <person name="Runnheim R."/>
            <person name="Forrest D."/>
            <person name="Amos-Landgraf J."/>
            <person name="Schwartz D.C."/>
            <person name="Cheng Z."/>
            <person name="Lindblad-Toh K."/>
            <person name="Eichler E.E."/>
            <person name="Ponting C.P."/>
        </authorList>
    </citation>
    <scope>NUCLEOTIDE SEQUENCE [LARGE SCALE GENOMIC DNA]</scope>
    <source>
        <strain>C57BL/6J</strain>
    </source>
</reference>
<reference key="3">
    <citation type="journal article" date="2004" name="Genome Res.">
        <title>The status, quality, and expansion of the NIH full-length cDNA project: the Mammalian Gene Collection (MGC).</title>
        <authorList>
            <consortium name="The MGC Project Team"/>
        </authorList>
    </citation>
    <scope>NUCLEOTIDE SEQUENCE [LARGE SCALE MRNA] OF 198-748</scope>
    <source>
        <strain>C57BL/6J</strain>
        <tissue>Brain</tissue>
    </source>
</reference>
<reference key="4">
    <citation type="journal article" date="2007" name="Proc. Natl. Acad. Sci. U.S.A.">
        <title>Large-scale phosphorylation analysis of mouse liver.</title>
        <authorList>
            <person name="Villen J."/>
            <person name="Beausoleil S.A."/>
            <person name="Gerber S.A."/>
            <person name="Gygi S.P."/>
        </authorList>
    </citation>
    <scope>PHOSPHORYLATION [LARGE SCALE ANALYSIS] AT SER-182</scope>
    <scope>IDENTIFICATION BY MASS SPECTROMETRY [LARGE SCALE ANALYSIS]</scope>
    <source>
        <tissue>Liver</tissue>
    </source>
</reference>
<reference key="5">
    <citation type="journal article" date="2007" name="Science">
        <title>ATM and ATR substrate analysis reveals extensive protein networks responsive to DNA damage.</title>
        <authorList>
            <person name="Matsuoka S."/>
            <person name="Ballif B.A."/>
            <person name="Smogorzewska A."/>
            <person name="McDonald E.R. III"/>
            <person name="Hurov K.E."/>
            <person name="Luo J."/>
            <person name="Bakalarski C.E."/>
            <person name="Zhao Z."/>
            <person name="Solimini N."/>
            <person name="Lerenthal Y."/>
            <person name="Shiloh Y."/>
            <person name="Gygi S.P."/>
            <person name="Elledge S.J."/>
        </authorList>
    </citation>
    <scope>IDENTIFICATION BY MASS SPECTROMETRY [LARGE SCALE ANALYSIS]</scope>
    <source>
        <tissue>Embryonic fibroblast</tissue>
    </source>
</reference>
<reference key="6">
    <citation type="journal article" date="2010" name="Cell">
        <title>A tissue-specific atlas of mouse protein phosphorylation and expression.</title>
        <authorList>
            <person name="Huttlin E.L."/>
            <person name="Jedrychowski M.P."/>
            <person name="Elias J.E."/>
            <person name="Goswami T."/>
            <person name="Rad R."/>
            <person name="Beausoleil S.A."/>
            <person name="Villen J."/>
            <person name="Haas W."/>
            <person name="Sowa M.E."/>
            <person name="Gygi S.P."/>
        </authorList>
    </citation>
    <scope>PHOSPHORYLATION [LARGE SCALE ANALYSIS] AT SER-182</scope>
    <scope>IDENTIFICATION BY MASS SPECTROMETRY [LARGE SCALE ANALYSIS]</scope>
    <source>
        <tissue>Brain</tissue>
        <tissue>Brown adipose tissue</tissue>
        <tissue>Heart</tissue>
        <tissue>Kidney</tissue>
        <tissue>Liver</tissue>
        <tissue>Lung</tissue>
        <tissue>Pancreas</tissue>
        <tissue>Spleen</tissue>
        <tissue>Testis</tissue>
    </source>
</reference>
<reference key="7">
    <citation type="journal article" date="2013" name="Mol. Cell">
        <title>SIRT5-mediated lysine desuccinylation impacts diverse metabolic pathways.</title>
        <authorList>
            <person name="Park J."/>
            <person name="Chen Y."/>
            <person name="Tishkoff D.X."/>
            <person name="Peng C."/>
            <person name="Tan M."/>
            <person name="Dai L."/>
            <person name="Xie Z."/>
            <person name="Zhang Y."/>
            <person name="Zwaans B.M."/>
            <person name="Skinner M.E."/>
            <person name="Lombard D.B."/>
            <person name="Zhao Y."/>
        </authorList>
    </citation>
    <scope>ACETYLATION [LARGE SCALE ANALYSIS] AT LYS-88</scope>
    <scope>IDENTIFICATION BY MASS SPECTROMETRY [LARGE SCALE ANALYSIS]</scope>
    <source>
        <tissue>Embryonic fibroblast</tissue>
    </source>
</reference>
<reference key="8">
    <citation type="journal article" date="2014" name="Mol. Cell. Proteomics">
        <title>Immunoaffinity enrichment and mass spectrometry analysis of protein methylation.</title>
        <authorList>
            <person name="Guo A."/>
            <person name="Gu H."/>
            <person name="Zhou J."/>
            <person name="Mulhern D."/>
            <person name="Wang Y."/>
            <person name="Lee K.A."/>
            <person name="Yang V."/>
            <person name="Aguiar M."/>
            <person name="Kornhauser J."/>
            <person name="Jia X."/>
            <person name="Ren J."/>
            <person name="Beausoleil S.A."/>
            <person name="Silva J.C."/>
            <person name="Vemulapalli V."/>
            <person name="Bedford M.T."/>
            <person name="Comb M.J."/>
        </authorList>
    </citation>
    <scope>METHYLATION [LARGE SCALE ANALYSIS] AT ARG-40; ARG-412; ARG-414; ARG-416 AND ARG-443</scope>
    <scope>IDENTIFICATION BY MASS SPECTROMETRY [LARGE SCALE ANALYSIS]</scope>
    <source>
        <tissue>Brain</tissue>
        <tissue>Embryo</tissue>
    </source>
</reference>
<name>FUBP2_MOUSE</name>
<feature type="initiator methionine" description="Removed" evidence="2">
    <location>
        <position position="1"/>
    </location>
</feature>
<feature type="chain" id="PRO_0000298678" description="Far upstream element-binding protein 2">
    <location>
        <begin position="2"/>
        <end position="748"/>
    </location>
</feature>
<feature type="domain" description="KH 1" evidence="3">
    <location>
        <begin position="145"/>
        <end position="209"/>
    </location>
</feature>
<feature type="domain" description="KH 2" evidence="3">
    <location>
        <begin position="234"/>
        <end position="300"/>
    </location>
</feature>
<feature type="domain" description="KH 3" evidence="3">
    <location>
        <begin position="323"/>
        <end position="387"/>
    </location>
</feature>
<feature type="domain" description="KH 4" evidence="3">
    <location>
        <begin position="425"/>
        <end position="492"/>
    </location>
</feature>
<feature type="repeat" description="1">
    <location>
        <begin position="572"/>
        <end position="583"/>
    </location>
</feature>
<feature type="repeat" description="2">
    <location>
        <begin position="618"/>
        <end position="629"/>
    </location>
</feature>
<feature type="repeat" description="3">
    <location>
        <begin position="644"/>
        <end position="655"/>
    </location>
</feature>
<feature type="repeat" description="4">
    <location>
        <begin position="674"/>
        <end position="685"/>
    </location>
</feature>
<feature type="region of interest" description="Disordered" evidence="4">
    <location>
        <begin position="1"/>
        <end position="78"/>
    </location>
</feature>
<feature type="region of interest" description="Disordered" evidence="4">
    <location>
        <begin position="90"/>
        <end position="148"/>
    </location>
</feature>
<feature type="region of interest" description="Disordered" evidence="4">
    <location>
        <begin position="394"/>
        <end position="422"/>
    </location>
</feature>
<feature type="region of interest" description="Disordered" evidence="4">
    <location>
        <begin position="498"/>
        <end position="570"/>
    </location>
</feature>
<feature type="region of interest" description="4 X 12 AA imperfect repeats">
    <location>
        <begin position="572"/>
        <end position="685"/>
    </location>
</feature>
<feature type="region of interest" description="Disordered" evidence="4">
    <location>
        <begin position="588"/>
        <end position="650"/>
    </location>
</feature>
<feature type="region of interest" description="Disordered" evidence="4">
    <location>
        <begin position="659"/>
        <end position="678"/>
    </location>
</feature>
<feature type="region of interest" description="Disordered" evidence="4">
    <location>
        <begin position="689"/>
        <end position="735"/>
    </location>
</feature>
<feature type="compositionally biased region" description="Pro residues" evidence="4">
    <location>
        <begin position="8"/>
        <end position="17"/>
    </location>
</feature>
<feature type="compositionally biased region" description="Gly residues" evidence="4">
    <location>
        <begin position="18"/>
        <end position="28"/>
    </location>
</feature>
<feature type="compositionally biased region" description="Gly residues" evidence="4">
    <location>
        <begin position="36"/>
        <end position="69"/>
    </location>
</feature>
<feature type="compositionally biased region" description="Basic and acidic residues" evidence="4">
    <location>
        <begin position="111"/>
        <end position="123"/>
    </location>
</feature>
<feature type="compositionally biased region" description="Pro residues" evidence="4">
    <location>
        <begin position="398"/>
        <end position="408"/>
    </location>
</feature>
<feature type="compositionally biased region" description="Gly residues" evidence="4">
    <location>
        <begin position="409"/>
        <end position="422"/>
    </location>
</feature>
<feature type="compositionally biased region" description="Pro residues" evidence="4">
    <location>
        <begin position="502"/>
        <end position="521"/>
    </location>
</feature>
<feature type="compositionally biased region" description="Pro residues" evidence="4">
    <location>
        <begin position="529"/>
        <end position="543"/>
    </location>
</feature>
<feature type="compositionally biased region" description="Pro residues" evidence="4">
    <location>
        <begin position="588"/>
        <end position="614"/>
    </location>
</feature>
<feature type="modified residue" description="N-acetylserine" evidence="2">
    <location>
        <position position="2"/>
    </location>
</feature>
<feature type="modified residue" description="Omega-N-methylarginine" evidence="9">
    <location>
        <position position="40"/>
    </location>
</feature>
<feature type="modified residue" description="N6-acetyllysine" evidence="8">
    <location>
        <position position="88"/>
    </location>
</feature>
<feature type="modified residue" description="Phosphothreonine" evidence="2">
    <location>
        <position position="101"/>
    </location>
</feature>
<feature type="modified residue" description="Phosphoserine" evidence="2">
    <location>
        <position position="126"/>
    </location>
</feature>
<feature type="modified residue" description="Phosphoserine" evidence="2">
    <location>
        <position position="130"/>
    </location>
</feature>
<feature type="modified residue" description="Phosphoserine" evidence="6 7">
    <location>
        <position position="182"/>
    </location>
</feature>
<feature type="modified residue" description="Phosphoserine" evidence="2">
    <location>
        <position position="185"/>
    </location>
</feature>
<feature type="modified residue" description="Phosphoserine" evidence="2">
    <location>
        <position position="194"/>
    </location>
</feature>
<feature type="modified residue" description="Phosphoserine" evidence="2">
    <location>
        <position position="275"/>
    </location>
</feature>
<feature type="modified residue" description="Omega-N-methylarginine" evidence="9">
    <location>
        <position position="412"/>
    </location>
</feature>
<feature type="modified residue" description="Omega-N-methylarginine" evidence="9">
    <location>
        <position position="414"/>
    </location>
</feature>
<feature type="modified residue" description="Omega-N-methylarginine" evidence="9">
    <location>
        <position position="416"/>
    </location>
</feature>
<feature type="modified residue" description="Omega-N-methylarginine" evidence="9">
    <location>
        <position position="443"/>
    </location>
</feature>
<feature type="modified residue" description="Phosphoserine" evidence="2">
    <location>
        <position position="481"/>
    </location>
</feature>
<feature type="cross-link" description="Glycyl lysine isopeptide (Lys-Gly) (interchain with G-Cter in SUMO1); alternate" evidence="2">
    <location>
        <position position="122"/>
    </location>
</feature>
<feature type="cross-link" description="Glycyl lysine isopeptide (Lys-Gly) (interchain with G-Cter in SUMO2); alternate" evidence="2">
    <location>
        <position position="122"/>
    </location>
</feature>
<feature type="sequence conflict" description="In Ref. 1; BAE33750." evidence="5" ref="1">
    <original>I</original>
    <variation>F</variation>
    <location>
        <position position="387"/>
    </location>
</feature>
<keyword id="KW-0007">Acetylation</keyword>
<keyword id="KW-0963">Cytoplasm</keyword>
<keyword id="KW-0238">DNA-binding</keyword>
<keyword id="KW-1017">Isopeptide bond</keyword>
<keyword id="KW-0488">Methylation</keyword>
<keyword id="KW-0507">mRNA processing</keyword>
<keyword id="KW-0508">mRNA splicing</keyword>
<keyword id="KW-0509">mRNA transport</keyword>
<keyword id="KW-0539">Nucleus</keyword>
<keyword id="KW-0597">Phosphoprotein</keyword>
<keyword id="KW-1185">Reference proteome</keyword>
<keyword id="KW-0677">Repeat</keyword>
<keyword id="KW-0694">RNA-binding</keyword>
<keyword id="KW-0804">Transcription</keyword>
<keyword id="KW-0805">Transcription regulation</keyword>
<keyword id="KW-0813">Transport</keyword>
<keyword id="KW-0832">Ubl conjugation</keyword>
<organism>
    <name type="scientific">Mus musculus</name>
    <name type="common">Mouse</name>
    <dbReference type="NCBI Taxonomy" id="10090"/>
    <lineage>
        <taxon>Eukaryota</taxon>
        <taxon>Metazoa</taxon>
        <taxon>Chordata</taxon>
        <taxon>Craniata</taxon>
        <taxon>Vertebrata</taxon>
        <taxon>Euteleostomi</taxon>
        <taxon>Mammalia</taxon>
        <taxon>Eutheria</taxon>
        <taxon>Euarchontoglires</taxon>
        <taxon>Glires</taxon>
        <taxon>Rodentia</taxon>
        <taxon>Myomorpha</taxon>
        <taxon>Muroidea</taxon>
        <taxon>Muridae</taxon>
        <taxon>Murinae</taxon>
        <taxon>Mus</taxon>
        <taxon>Mus</taxon>
    </lineage>
</organism>
<evidence type="ECO:0000250" key="1"/>
<evidence type="ECO:0000250" key="2">
    <source>
        <dbReference type="UniProtKB" id="Q92945"/>
    </source>
</evidence>
<evidence type="ECO:0000255" key="3">
    <source>
        <dbReference type="PROSITE-ProRule" id="PRU00117"/>
    </source>
</evidence>
<evidence type="ECO:0000256" key="4">
    <source>
        <dbReference type="SAM" id="MobiDB-lite"/>
    </source>
</evidence>
<evidence type="ECO:0000305" key="5"/>
<evidence type="ECO:0007744" key="6">
    <source>
    </source>
</evidence>
<evidence type="ECO:0007744" key="7">
    <source>
    </source>
</evidence>
<evidence type="ECO:0007744" key="8">
    <source>
    </source>
</evidence>
<evidence type="ECO:0007744" key="9">
    <source>
    </source>
</evidence>
<sequence>MSDYNTGGPPPGPPPPAGGGGGAAGAGGGPPPGPPGAGDRGGGGPGGGGPGGGGASGGPSQPPGGGGPGIRKDAFADAVQRARQIAAKIGGDAATTVNNNTPDFGFGGQKRQLEDGDQPDSKKLASQGDSIGSQLGPIHPPPRTSMTEEYRVPDGMVGLIIGRGGEQINKIQQDSGCKVQISPDSGGLPERSVSLTGAPESVQKAKMMLDDIVSRGRGGPPGQFHDNANGGQNGTVQEIMIPAGKAGLVIGKGGETIKQLQERAGVKMILIQDGSQNTNVDKPLRIIGDPYKVQQACEMVMDILRERDQGGFGDRNEYGSRVGGGIDVPVPRHSVGVVIGRSGEMIKKIQNDAGVRIQFKQDDGTGPEKIAHIMGPPDRCEHAARIINDLLQSLRSGPPGPPGAPGMPPGGRGRGRGQGNWGPPGGEMTFSIPTHKCGLVIGRGGENVKAINQQTGAFVEISRQLPPNGDPNFKLFVIRGSPQQIDHAKQLIEEKIEGPLCPVGPGPGGPGPAGPMGPFNPGPFNQGPPGAPPHAGGPPPHQYPPQGWGNTYPQWQPPAPHDPNKAAAAATDPNAAWAAYYSHYYQQPPGPVPGPAPAPAAPPAQGEPPQPPPTGQSDYTKAWEEYYKKIGQQPQQPGAPPQQDYTKAWEEYYKKQAQVATGGGPGAPPGSQPDYSAAWAEYYRQQAAYYGQTPGPGGPQPPPTQQGQQQASGNCHPPPPPFSFQPPATVHPALVGSAGNPFPCGVCP</sequence>
<comment type="function">
    <text evidence="1">Binds to the dendritic targeting element and may play a role in mRNA trafficking. Part of a ternary complex that binds to the downstream control sequence (DCS) of the pre-mRNA. Mediates exon inclusion in transcripts that are subject to tissue-specific alternative splicing. May interact with single-stranded DNA from the far-upstream element (FUSE). May activate gene expression. Also involved in degradation of inherently unstable mRNAs that contain AU-rich elements (AREs) in their 3'-UTR, possibly by recruiting degradation machinery to ARE-containing mRNAs (By similarity).</text>
</comment>
<comment type="subunit">
    <text evidence="2">Part of a ternary complex containing FUBP2, PTBP1, PTBP2 and HNRPH1. Interacts with PARN. Interacts with PQBP1.</text>
</comment>
<comment type="subcellular location">
    <subcellularLocation>
        <location evidence="1">Nucleus</location>
    </subcellularLocation>
    <subcellularLocation>
        <location evidence="1">Cytoplasm</location>
    </subcellularLocation>
    <text evidence="1">A small proportion is also found in the cytoplasm of neuronal cell bodies and dendrites.</text>
</comment>
<comment type="similarity">
    <text evidence="5">Belongs to the KHSRP family.</text>
</comment>
<proteinExistence type="evidence at protein level"/>
<accession>Q3U0V1</accession>
<accession>E9QKH3</accession>
<accession>Q2VPQ6</accession>
<accession>Q6P2L2</accession>
<dbReference type="EMBL" id="AK156541">
    <property type="protein sequence ID" value="BAE33750.1"/>
    <property type="molecule type" value="mRNA"/>
</dbReference>
<dbReference type="EMBL" id="CT571247">
    <property type="status" value="NOT_ANNOTATED_CDS"/>
    <property type="molecule type" value="Genomic_DNA"/>
</dbReference>
<dbReference type="EMBL" id="BC064454">
    <property type="protein sequence ID" value="AAH64454.1"/>
    <property type="molecule type" value="mRNA"/>
</dbReference>
<dbReference type="EMBL" id="BC108414">
    <property type="protein sequence ID" value="AAI08415.1"/>
    <property type="molecule type" value="mRNA"/>
</dbReference>
<dbReference type="CCDS" id="CCDS50157.1"/>
<dbReference type="RefSeq" id="NP_034743.3">
    <property type="nucleotide sequence ID" value="NM_010613.3"/>
</dbReference>
<dbReference type="SMR" id="Q3U0V1"/>
<dbReference type="BioGRID" id="200927">
    <property type="interactions" value="31"/>
</dbReference>
<dbReference type="CORUM" id="Q3U0V1"/>
<dbReference type="FunCoup" id="Q3U0V1">
    <property type="interactions" value="3972"/>
</dbReference>
<dbReference type="IntAct" id="Q3U0V1">
    <property type="interactions" value="9"/>
</dbReference>
<dbReference type="MINT" id="Q3U0V1"/>
<dbReference type="STRING" id="10090.ENSMUSP00000007814"/>
<dbReference type="GlyGen" id="Q3U0V1">
    <property type="glycosylation" value="4 sites, 1 O-linked glycan (3 sites)"/>
</dbReference>
<dbReference type="iPTMnet" id="Q3U0V1"/>
<dbReference type="PhosphoSitePlus" id="Q3U0V1"/>
<dbReference type="SwissPalm" id="Q3U0V1"/>
<dbReference type="jPOST" id="Q3U0V1"/>
<dbReference type="PaxDb" id="10090-ENSMUSP00000007814"/>
<dbReference type="PeptideAtlas" id="Q3U0V1"/>
<dbReference type="ProteomicsDB" id="266885"/>
<dbReference type="Pumba" id="Q3U0V1"/>
<dbReference type="Antibodypedia" id="6316">
    <property type="antibodies" value="329 antibodies from 35 providers"/>
</dbReference>
<dbReference type="DNASU" id="16549"/>
<dbReference type="Ensembl" id="ENSMUST00000007814.10">
    <property type="protein sequence ID" value="ENSMUSP00000007814.9"/>
    <property type="gene ID" value="ENSMUSG00000007670.11"/>
</dbReference>
<dbReference type="GeneID" id="16549"/>
<dbReference type="KEGG" id="mmu:16549"/>
<dbReference type="UCSC" id="uc008ddr.2">
    <property type="organism name" value="mouse"/>
</dbReference>
<dbReference type="AGR" id="MGI:1336214"/>
<dbReference type="CTD" id="8570"/>
<dbReference type="MGI" id="MGI:1336214">
    <property type="gene designation" value="Khsrp"/>
</dbReference>
<dbReference type="VEuPathDB" id="HostDB:ENSMUSG00000007670"/>
<dbReference type="eggNOG" id="KOG1676">
    <property type="taxonomic scope" value="Eukaryota"/>
</dbReference>
<dbReference type="GeneTree" id="ENSGT00940000156051"/>
<dbReference type="HOGENOM" id="CLU_014285_1_0_1"/>
<dbReference type="InParanoid" id="Q3U0V1"/>
<dbReference type="OMA" id="QPVHQWA"/>
<dbReference type="OrthoDB" id="5204190at2759"/>
<dbReference type="PhylomeDB" id="Q3U0V1"/>
<dbReference type="TreeFam" id="TF313654"/>
<dbReference type="Reactome" id="R-MMU-450604">
    <property type="pathway name" value="KSRP (KHSRP) binds and destabilizes mRNA"/>
</dbReference>
<dbReference type="BioGRID-ORCS" id="16549">
    <property type="hits" value="5 hits in 80 CRISPR screens"/>
</dbReference>
<dbReference type="ChiTaRS" id="Khsrp">
    <property type="organism name" value="mouse"/>
</dbReference>
<dbReference type="PRO" id="PR:Q3U0V1"/>
<dbReference type="Proteomes" id="UP000000589">
    <property type="component" value="Chromosome 17"/>
</dbReference>
<dbReference type="RNAct" id="Q3U0V1">
    <property type="molecule type" value="protein"/>
</dbReference>
<dbReference type="Bgee" id="ENSMUSG00000007670">
    <property type="expression patterns" value="Expressed in ventricular zone and 227 other cell types or tissues"/>
</dbReference>
<dbReference type="ExpressionAtlas" id="Q3U0V1">
    <property type="expression patterns" value="baseline and differential"/>
</dbReference>
<dbReference type="GO" id="GO:0010494">
    <property type="term" value="C:cytoplasmic stress granule"/>
    <property type="evidence" value="ECO:0000314"/>
    <property type="project" value="MGI"/>
</dbReference>
<dbReference type="GO" id="GO:0005829">
    <property type="term" value="C:cytosol"/>
    <property type="evidence" value="ECO:0000304"/>
    <property type="project" value="Reactome"/>
</dbReference>
<dbReference type="GO" id="GO:0005654">
    <property type="term" value="C:nucleoplasm"/>
    <property type="evidence" value="ECO:0007669"/>
    <property type="project" value="Ensembl"/>
</dbReference>
<dbReference type="GO" id="GO:0003677">
    <property type="term" value="F:DNA binding"/>
    <property type="evidence" value="ECO:0007669"/>
    <property type="project" value="UniProtKB-KW"/>
</dbReference>
<dbReference type="GO" id="GO:0035925">
    <property type="term" value="F:mRNA 3'-UTR AU-rich region binding"/>
    <property type="evidence" value="ECO:0000250"/>
    <property type="project" value="UniProtKB"/>
</dbReference>
<dbReference type="GO" id="GO:0003729">
    <property type="term" value="F:mRNA binding"/>
    <property type="evidence" value="ECO:0000314"/>
    <property type="project" value="MGI"/>
</dbReference>
<dbReference type="GO" id="GO:0061158">
    <property type="term" value="P:3'-UTR-mediated mRNA destabilization"/>
    <property type="evidence" value="ECO:0000250"/>
    <property type="project" value="UniProtKB"/>
</dbReference>
<dbReference type="GO" id="GO:0071345">
    <property type="term" value="P:cellular response to cytokine stimulus"/>
    <property type="evidence" value="ECO:0000250"/>
    <property type="project" value="UniProtKB"/>
</dbReference>
<dbReference type="GO" id="GO:0010586">
    <property type="term" value="P:miRNA metabolic process"/>
    <property type="evidence" value="ECO:0000250"/>
    <property type="project" value="UniProtKB"/>
</dbReference>
<dbReference type="GO" id="GO:0006402">
    <property type="term" value="P:mRNA catabolic process"/>
    <property type="evidence" value="ECO:0000314"/>
    <property type="project" value="MGI"/>
</dbReference>
<dbReference type="GO" id="GO:0006397">
    <property type="term" value="P:mRNA processing"/>
    <property type="evidence" value="ECO:0007669"/>
    <property type="project" value="UniProtKB-KW"/>
</dbReference>
<dbReference type="GO" id="GO:0051028">
    <property type="term" value="P:mRNA transport"/>
    <property type="evidence" value="ECO:0007669"/>
    <property type="project" value="UniProtKB-KW"/>
</dbReference>
<dbReference type="GO" id="GO:0045019">
    <property type="term" value="P:negative regulation of nitric oxide biosynthetic process"/>
    <property type="evidence" value="ECO:0000250"/>
    <property type="project" value="UniProtKB"/>
</dbReference>
<dbReference type="GO" id="GO:0061014">
    <property type="term" value="P:positive regulation of mRNA catabolic process"/>
    <property type="evidence" value="ECO:0000250"/>
    <property type="project" value="UniProtKB"/>
</dbReference>
<dbReference type="GO" id="GO:0006355">
    <property type="term" value="P:regulation of DNA-templated transcription"/>
    <property type="evidence" value="ECO:0007669"/>
    <property type="project" value="InterPro"/>
</dbReference>
<dbReference type="GO" id="GO:2000628">
    <property type="term" value="P:regulation of miRNA metabolic process"/>
    <property type="evidence" value="ECO:0000314"/>
    <property type="project" value="MGI"/>
</dbReference>
<dbReference type="GO" id="GO:0043488">
    <property type="term" value="P:regulation of mRNA stability"/>
    <property type="evidence" value="ECO:0000250"/>
    <property type="project" value="UniProtKB"/>
</dbReference>
<dbReference type="GO" id="GO:0008380">
    <property type="term" value="P:RNA splicing"/>
    <property type="evidence" value="ECO:0007669"/>
    <property type="project" value="UniProtKB-KW"/>
</dbReference>
<dbReference type="CDD" id="cd22479">
    <property type="entry name" value="KH-I_FUBP2_rpt1"/>
    <property type="match status" value="1"/>
</dbReference>
<dbReference type="CDD" id="cd22482">
    <property type="entry name" value="KH-I_FUBP2_rpt2"/>
    <property type="match status" value="1"/>
</dbReference>
<dbReference type="CDD" id="cd22485">
    <property type="entry name" value="KH-I_FUBP2_rpt3"/>
    <property type="match status" value="1"/>
</dbReference>
<dbReference type="CDD" id="cd22488">
    <property type="entry name" value="KH-I_FUBP2_rpt4"/>
    <property type="match status" value="1"/>
</dbReference>
<dbReference type="FunFam" id="3.30.1370.10:FF:000007">
    <property type="entry name" value="far upstream element-binding protein 1 isoform X1"/>
    <property type="match status" value="1"/>
</dbReference>
<dbReference type="FunFam" id="3.30.1370.10:FF:000008">
    <property type="entry name" value="far upstream element-binding protein 1 isoform X1"/>
    <property type="match status" value="1"/>
</dbReference>
<dbReference type="FunFam" id="3.30.1370.10:FF:000010">
    <property type="entry name" value="far upstream element-binding protein 1 isoform X1"/>
    <property type="match status" value="1"/>
</dbReference>
<dbReference type="FunFam" id="3.30.1370.10:FF:000049">
    <property type="entry name" value="far upstream element-binding protein 2"/>
    <property type="match status" value="1"/>
</dbReference>
<dbReference type="Gene3D" id="3.30.1370.10">
    <property type="entry name" value="K Homology domain, type 1"/>
    <property type="match status" value="4"/>
</dbReference>
<dbReference type="InterPro" id="IPR015096">
    <property type="entry name" value="FUBP_C"/>
</dbReference>
<dbReference type="InterPro" id="IPR047372">
    <property type="entry name" value="KH-I_FUBP2_rpt1"/>
</dbReference>
<dbReference type="InterPro" id="IPR047369">
    <property type="entry name" value="KH-I_FUBP2_rpt2"/>
</dbReference>
<dbReference type="InterPro" id="IPR047370">
    <property type="entry name" value="KH-I_FUBP2_rpt3"/>
</dbReference>
<dbReference type="InterPro" id="IPR047371">
    <property type="entry name" value="KH-I_FUBP2_rpt4"/>
</dbReference>
<dbReference type="InterPro" id="IPR004087">
    <property type="entry name" value="KH_dom"/>
</dbReference>
<dbReference type="InterPro" id="IPR004088">
    <property type="entry name" value="KH_dom_type_1"/>
</dbReference>
<dbReference type="InterPro" id="IPR036612">
    <property type="entry name" value="KH_dom_type_1_sf"/>
</dbReference>
<dbReference type="PANTHER" id="PTHR10288">
    <property type="entry name" value="KH DOMAIN CONTAINING RNA BINDING PROTEIN"/>
    <property type="match status" value="1"/>
</dbReference>
<dbReference type="Pfam" id="PF09005">
    <property type="entry name" value="FUBP_C"/>
    <property type="match status" value="2"/>
</dbReference>
<dbReference type="Pfam" id="PF00013">
    <property type="entry name" value="KH_1"/>
    <property type="match status" value="4"/>
</dbReference>
<dbReference type="SMART" id="SM00322">
    <property type="entry name" value="KH"/>
    <property type="match status" value="4"/>
</dbReference>
<dbReference type="SUPFAM" id="SSF54791">
    <property type="entry name" value="Eukaryotic type KH-domain (KH-domain type I)"/>
    <property type="match status" value="4"/>
</dbReference>
<dbReference type="PROSITE" id="PS00178">
    <property type="entry name" value="AA_TRNA_LIGASE_I"/>
    <property type="match status" value="1"/>
</dbReference>
<dbReference type="PROSITE" id="PS50084">
    <property type="entry name" value="KH_TYPE_1"/>
    <property type="match status" value="4"/>
</dbReference>
<gene>
    <name type="primary">Khsrp</name>
    <name type="synonym">Fubp2</name>
</gene>
<protein>
    <recommendedName>
        <fullName>Far upstream element-binding protein 2</fullName>
        <shortName>FUSE-binding protein 2</shortName>
    </recommendedName>
    <alternativeName>
        <fullName>KH type-splicing regulatory protein</fullName>
        <shortName>KSRP</shortName>
    </alternativeName>
</protein>